<evidence type="ECO:0000255" key="1">
    <source>
        <dbReference type="HAMAP-Rule" id="MF_01323"/>
    </source>
</evidence>
<gene>
    <name evidence="1" type="primary">rpoC1</name>
</gene>
<organism>
    <name type="scientific">Lemna minor</name>
    <name type="common">Common duckweed</name>
    <dbReference type="NCBI Taxonomy" id="4472"/>
    <lineage>
        <taxon>Eukaryota</taxon>
        <taxon>Viridiplantae</taxon>
        <taxon>Streptophyta</taxon>
        <taxon>Embryophyta</taxon>
        <taxon>Tracheophyta</taxon>
        <taxon>Spermatophyta</taxon>
        <taxon>Magnoliopsida</taxon>
        <taxon>Liliopsida</taxon>
        <taxon>Araceae</taxon>
        <taxon>Lemnoideae</taxon>
        <taxon>Lemna</taxon>
    </lineage>
</organism>
<proteinExistence type="inferred from homology"/>
<reference key="1">
    <citation type="journal article" date="2008" name="J. Mol. Evol.">
        <title>Complete sequence of the Duckweed (Lemna minor) chloroplast genome: structural organization and phylogenetic relationships to other angiosperms.</title>
        <authorList>
            <person name="Mardanov A.V."/>
            <person name="Ravin N.V."/>
            <person name="Kuznetsov B.B."/>
            <person name="Samigullin T.H."/>
            <person name="Antonov A.S."/>
            <person name="Kolganova T.V."/>
            <person name="Skyabin K.G."/>
        </authorList>
    </citation>
    <scope>NUCLEOTIDE SEQUENCE [LARGE SCALE GENOMIC DNA]</scope>
</reference>
<protein>
    <recommendedName>
        <fullName evidence="1">DNA-directed RNA polymerase subunit beta'</fullName>
        <ecNumber evidence="1">2.7.7.6</ecNumber>
    </recommendedName>
    <alternativeName>
        <fullName evidence="1">PEP</fullName>
    </alternativeName>
    <alternativeName>
        <fullName evidence="1">Plastid-encoded RNA polymerase subunit beta'</fullName>
        <shortName evidence="1">RNA polymerase subunit beta'</shortName>
    </alternativeName>
</protein>
<name>RPOC1_LEMMI</name>
<accession>A9L987</accession>
<comment type="function">
    <text evidence="1">DNA-dependent RNA polymerase catalyzes the transcription of DNA into RNA using the four ribonucleoside triphosphates as substrates.</text>
</comment>
<comment type="catalytic activity">
    <reaction evidence="1">
        <text>RNA(n) + a ribonucleoside 5'-triphosphate = RNA(n+1) + diphosphate</text>
        <dbReference type="Rhea" id="RHEA:21248"/>
        <dbReference type="Rhea" id="RHEA-COMP:14527"/>
        <dbReference type="Rhea" id="RHEA-COMP:17342"/>
        <dbReference type="ChEBI" id="CHEBI:33019"/>
        <dbReference type="ChEBI" id="CHEBI:61557"/>
        <dbReference type="ChEBI" id="CHEBI:140395"/>
        <dbReference type="EC" id="2.7.7.6"/>
    </reaction>
</comment>
<comment type="cofactor">
    <cofactor evidence="1">
        <name>Mg(2+)</name>
        <dbReference type="ChEBI" id="CHEBI:18420"/>
    </cofactor>
    <text evidence="1">Binds 1 Mg(2+) ion per subunit.</text>
</comment>
<comment type="cofactor">
    <cofactor evidence="1">
        <name>Zn(2+)</name>
        <dbReference type="ChEBI" id="CHEBI:29105"/>
    </cofactor>
    <text evidence="1">Binds 1 Zn(2+) ion per subunit.</text>
</comment>
<comment type="subunit">
    <text evidence="1">In plastids the minimal PEP RNA polymerase catalytic core is composed of four subunits: alpha, beta, beta', and beta''. When a (nuclear-encoded) sigma factor is associated with the core the holoenzyme is formed, which can initiate transcription.</text>
</comment>
<comment type="subcellular location">
    <subcellularLocation>
        <location evidence="1">Plastid</location>
        <location evidence="1">Chloroplast</location>
    </subcellularLocation>
</comment>
<comment type="similarity">
    <text evidence="1">Belongs to the RNA polymerase beta' chain family. RpoC1 subfamily.</text>
</comment>
<feature type="chain" id="PRO_0000353495" description="DNA-directed RNA polymerase subunit beta'">
    <location>
        <begin position="1"/>
        <end position="690"/>
    </location>
</feature>
<feature type="binding site" evidence="1">
    <location>
        <position position="76"/>
    </location>
    <ligand>
        <name>Zn(2+)</name>
        <dbReference type="ChEBI" id="CHEBI:29105"/>
    </ligand>
</feature>
<feature type="binding site" evidence="1">
    <location>
        <position position="78"/>
    </location>
    <ligand>
        <name>Zn(2+)</name>
        <dbReference type="ChEBI" id="CHEBI:29105"/>
    </ligand>
</feature>
<feature type="binding site" evidence="1">
    <location>
        <position position="94"/>
    </location>
    <ligand>
        <name>Zn(2+)</name>
        <dbReference type="ChEBI" id="CHEBI:29105"/>
    </ligand>
</feature>
<feature type="binding site" evidence="1">
    <location>
        <position position="97"/>
    </location>
    <ligand>
        <name>Zn(2+)</name>
        <dbReference type="ChEBI" id="CHEBI:29105"/>
    </ligand>
</feature>
<feature type="binding site" evidence="1">
    <location>
        <position position="496"/>
    </location>
    <ligand>
        <name>Mg(2+)</name>
        <dbReference type="ChEBI" id="CHEBI:18420"/>
    </ligand>
</feature>
<feature type="binding site" evidence="1">
    <location>
        <position position="498"/>
    </location>
    <ligand>
        <name>Mg(2+)</name>
        <dbReference type="ChEBI" id="CHEBI:18420"/>
    </ligand>
</feature>
<feature type="binding site" evidence="1">
    <location>
        <position position="500"/>
    </location>
    <ligand>
        <name>Mg(2+)</name>
        <dbReference type="ChEBI" id="CHEBI:18420"/>
    </ligand>
</feature>
<dbReference type="EC" id="2.7.7.6" evidence="1"/>
<dbReference type="EMBL" id="DQ400350">
    <property type="protein sequence ID" value="ABD48486.1"/>
    <property type="molecule type" value="Genomic_DNA"/>
</dbReference>
<dbReference type="RefSeq" id="YP_001595499.1">
    <property type="nucleotide sequence ID" value="NC_010109.1"/>
</dbReference>
<dbReference type="SMR" id="A9L987"/>
<dbReference type="GeneID" id="5787571"/>
<dbReference type="GO" id="GO:0009507">
    <property type="term" value="C:chloroplast"/>
    <property type="evidence" value="ECO:0007669"/>
    <property type="project" value="UniProtKB-SubCell"/>
</dbReference>
<dbReference type="GO" id="GO:0000428">
    <property type="term" value="C:DNA-directed RNA polymerase complex"/>
    <property type="evidence" value="ECO:0007669"/>
    <property type="project" value="UniProtKB-KW"/>
</dbReference>
<dbReference type="GO" id="GO:0005739">
    <property type="term" value="C:mitochondrion"/>
    <property type="evidence" value="ECO:0007669"/>
    <property type="project" value="GOC"/>
</dbReference>
<dbReference type="GO" id="GO:0003677">
    <property type="term" value="F:DNA binding"/>
    <property type="evidence" value="ECO:0007669"/>
    <property type="project" value="UniProtKB-UniRule"/>
</dbReference>
<dbReference type="GO" id="GO:0003899">
    <property type="term" value="F:DNA-directed RNA polymerase activity"/>
    <property type="evidence" value="ECO:0007669"/>
    <property type="project" value="UniProtKB-UniRule"/>
</dbReference>
<dbReference type="GO" id="GO:0000287">
    <property type="term" value="F:magnesium ion binding"/>
    <property type="evidence" value="ECO:0007669"/>
    <property type="project" value="UniProtKB-UniRule"/>
</dbReference>
<dbReference type="GO" id="GO:0008270">
    <property type="term" value="F:zinc ion binding"/>
    <property type="evidence" value="ECO:0007669"/>
    <property type="project" value="UniProtKB-UniRule"/>
</dbReference>
<dbReference type="GO" id="GO:0006351">
    <property type="term" value="P:DNA-templated transcription"/>
    <property type="evidence" value="ECO:0007669"/>
    <property type="project" value="UniProtKB-UniRule"/>
</dbReference>
<dbReference type="FunFam" id="1.10.40.90:FF:000002">
    <property type="entry name" value="DNA-directed RNA polymerase subunit"/>
    <property type="match status" value="1"/>
</dbReference>
<dbReference type="FunFam" id="4.10.860.120:FF:000007">
    <property type="entry name" value="DNA-directed RNA polymerase subunit gamma"/>
    <property type="match status" value="1"/>
</dbReference>
<dbReference type="Gene3D" id="1.10.40.90">
    <property type="match status" value="1"/>
</dbReference>
<dbReference type="Gene3D" id="2.40.40.20">
    <property type="match status" value="1"/>
</dbReference>
<dbReference type="Gene3D" id="4.10.860.120">
    <property type="entry name" value="RNA polymerase II, clamp domain"/>
    <property type="match status" value="1"/>
</dbReference>
<dbReference type="Gene3D" id="1.10.274.100">
    <property type="entry name" value="RNA polymerase Rpb1, domain 3"/>
    <property type="match status" value="1"/>
</dbReference>
<dbReference type="HAMAP" id="MF_01323">
    <property type="entry name" value="RNApol_bact_RpoC1"/>
    <property type="match status" value="1"/>
</dbReference>
<dbReference type="InterPro" id="IPR045867">
    <property type="entry name" value="DNA-dir_RpoC_beta_prime"/>
</dbReference>
<dbReference type="InterPro" id="IPR000722">
    <property type="entry name" value="RNA_pol_asu"/>
</dbReference>
<dbReference type="InterPro" id="IPR006592">
    <property type="entry name" value="RNA_pol_N"/>
</dbReference>
<dbReference type="InterPro" id="IPR007080">
    <property type="entry name" value="RNA_pol_Rpb1_1"/>
</dbReference>
<dbReference type="InterPro" id="IPR042102">
    <property type="entry name" value="RNA_pol_Rpb1_3_sf"/>
</dbReference>
<dbReference type="InterPro" id="IPR044893">
    <property type="entry name" value="RNA_pol_Rpb1_clamp_domain"/>
</dbReference>
<dbReference type="InterPro" id="IPR034678">
    <property type="entry name" value="RNApol_RpoC1"/>
</dbReference>
<dbReference type="PANTHER" id="PTHR19376">
    <property type="entry name" value="DNA-DIRECTED RNA POLYMERASE"/>
    <property type="match status" value="1"/>
</dbReference>
<dbReference type="PANTHER" id="PTHR19376:SF54">
    <property type="entry name" value="DNA-DIRECTED RNA POLYMERASE SUBUNIT BETA"/>
    <property type="match status" value="1"/>
</dbReference>
<dbReference type="Pfam" id="PF04997">
    <property type="entry name" value="RNA_pol_Rpb1_1"/>
    <property type="match status" value="1"/>
</dbReference>
<dbReference type="Pfam" id="PF00623">
    <property type="entry name" value="RNA_pol_Rpb1_2"/>
    <property type="match status" value="2"/>
</dbReference>
<dbReference type="SMART" id="SM00663">
    <property type="entry name" value="RPOLA_N"/>
    <property type="match status" value="1"/>
</dbReference>
<dbReference type="SUPFAM" id="SSF64484">
    <property type="entry name" value="beta and beta-prime subunits of DNA dependent RNA-polymerase"/>
    <property type="match status" value="1"/>
</dbReference>
<keyword id="KW-0150">Chloroplast</keyword>
<keyword id="KW-0240">DNA-directed RNA polymerase</keyword>
<keyword id="KW-0460">Magnesium</keyword>
<keyword id="KW-0479">Metal-binding</keyword>
<keyword id="KW-0548">Nucleotidyltransferase</keyword>
<keyword id="KW-0934">Plastid</keyword>
<keyword id="KW-0804">Transcription</keyword>
<keyword id="KW-0808">Transferase</keyword>
<keyword id="KW-0862">Zinc</keyword>
<geneLocation type="chloroplast"/>
<sequence length="690" mass="79509">MNQNFYSMIDRYKHQQLRIGPVSPQQISAWANKILPNGEVVGEVTKPYTFHYKTNKPEKDGLFCERIFGPIKSGICACGNYRVIGAEKEDPKFCEQCGVEFVDSRVRRYQMGYIKLACPVTHVWYLKRLPSYIANLLDKPLKELEGLVYCDFSFARPIAKKPTFLRLRGSFEYEIQSWKYSIPLFFTTQGFETFRNREISTGAGAIREQLADLDLRIITDNSLIEWKELGDEGSTGNEWEDRKIRRRKDFLVRRMELAKHFIRTNVEPEWMVLCLLPVLPPELRPIIQIDGGKLMSSDINELYRRVIYRNNTLTDLLTTSRSTPGELVMCQEKLVQEAVDTLLDNGIRGQPMRDGHNKVYKSFSDVIEGKEGRFRETLLGKRVDYSGRSVIVVGPSLSLHQCGLPREIAIELFQTFVIRGLIRQHVASNIGIAKSKIREKEPIVWEILQEVMQGHPVLLNRAPTLHRLGIQAFQPILVEGRAICLHPLVCKGFNADFDGDQMAVHVPLSLEAQAEARLLMFSHMNLLSPAIGDPISVPTQDMLIGLYVLTIGNPRGICANRYNFFNCKNDENAPLDNDNYQATKEKEPHFSSSYDALGAYRRKRIRLDSPLWLRWRLDQRVIIGSREVPLEVQYESFGTYHEIYRHYLIVRSVKKEICSIYIRTTVGHISFYREIEEAIQGFYRAYSYAS</sequence>